<name>RL14_ACIAD</name>
<proteinExistence type="inferred from homology"/>
<dbReference type="EMBL" id="CR543861">
    <property type="protein sequence ID" value="CAG69893.1"/>
    <property type="molecule type" value="Genomic_DNA"/>
</dbReference>
<dbReference type="RefSeq" id="WP_004924120.1">
    <property type="nucleotide sequence ID" value="NC_005966.1"/>
</dbReference>
<dbReference type="SMR" id="Q6F7S2"/>
<dbReference type="STRING" id="202950.GCA_001485005_02946"/>
<dbReference type="GeneID" id="67513061"/>
<dbReference type="KEGG" id="aci:ACIAD3209"/>
<dbReference type="eggNOG" id="COG0093">
    <property type="taxonomic scope" value="Bacteria"/>
</dbReference>
<dbReference type="HOGENOM" id="CLU_095071_2_1_6"/>
<dbReference type="OrthoDB" id="9806379at2"/>
<dbReference type="BioCyc" id="ASP62977:ACIAD_RS14545-MONOMER"/>
<dbReference type="Proteomes" id="UP000000430">
    <property type="component" value="Chromosome"/>
</dbReference>
<dbReference type="GO" id="GO:0022625">
    <property type="term" value="C:cytosolic large ribosomal subunit"/>
    <property type="evidence" value="ECO:0007669"/>
    <property type="project" value="TreeGrafter"/>
</dbReference>
<dbReference type="GO" id="GO:0070180">
    <property type="term" value="F:large ribosomal subunit rRNA binding"/>
    <property type="evidence" value="ECO:0007669"/>
    <property type="project" value="TreeGrafter"/>
</dbReference>
<dbReference type="GO" id="GO:0003735">
    <property type="term" value="F:structural constituent of ribosome"/>
    <property type="evidence" value="ECO:0007669"/>
    <property type="project" value="InterPro"/>
</dbReference>
<dbReference type="GO" id="GO:0006412">
    <property type="term" value="P:translation"/>
    <property type="evidence" value="ECO:0007669"/>
    <property type="project" value="UniProtKB-UniRule"/>
</dbReference>
<dbReference type="CDD" id="cd00337">
    <property type="entry name" value="Ribosomal_uL14"/>
    <property type="match status" value="1"/>
</dbReference>
<dbReference type="FunFam" id="2.40.150.20:FF:000001">
    <property type="entry name" value="50S ribosomal protein L14"/>
    <property type="match status" value="1"/>
</dbReference>
<dbReference type="Gene3D" id="2.40.150.20">
    <property type="entry name" value="Ribosomal protein L14"/>
    <property type="match status" value="1"/>
</dbReference>
<dbReference type="HAMAP" id="MF_01367">
    <property type="entry name" value="Ribosomal_uL14"/>
    <property type="match status" value="1"/>
</dbReference>
<dbReference type="InterPro" id="IPR000218">
    <property type="entry name" value="Ribosomal_uL14"/>
</dbReference>
<dbReference type="InterPro" id="IPR005745">
    <property type="entry name" value="Ribosomal_uL14_bac-type"/>
</dbReference>
<dbReference type="InterPro" id="IPR019972">
    <property type="entry name" value="Ribosomal_uL14_CS"/>
</dbReference>
<dbReference type="InterPro" id="IPR036853">
    <property type="entry name" value="Ribosomal_uL14_sf"/>
</dbReference>
<dbReference type="NCBIfam" id="TIGR01067">
    <property type="entry name" value="rplN_bact"/>
    <property type="match status" value="1"/>
</dbReference>
<dbReference type="PANTHER" id="PTHR11761">
    <property type="entry name" value="50S/60S RIBOSOMAL PROTEIN L14/L23"/>
    <property type="match status" value="1"/>
</dbReference>
<dbReference type="PANTHER" id="PTHR11761:SF3">
    <property type="entry name" value="LARGE RIBOSOMAL SUBUNIT PROTEIN UL14M"/>
    <property type="match status" value="1"/>
</dbReference>
<dbReference type="Pfam" id="PF00238">
    <property type="entry name" value="Ribosomal_L14"/>
    <property type="match status" value="1"/>
</dbReference>
<dbReference type="SMART" id="SM01374">
    <property type="entry name" value="Ribosomal_L14"/>
    <property type="match status" value="1"/>
</dbReference>
<dbReference type="SUPFAM" id="SSF50193">
    <property type="entry name" value="Ribosomal protein L14"/>
    <property type="match status" value="1"/>
</dbReference>
<dbReference type="PROSITE" id="PS00049">
    <property type="entry name" value="RIBOSOMAL_L14"/>
    <property type="match status" value="1"/>
</dbReference>
<protein>
    <recommendedName>
        <fullName evidence="1">Large ribosomal subunit protein uL14</fullName>
    </recommendedName>
    <alternativeName>
        <fullName evidence="2">50S ribosomal protein L14</fullName>
    </alternativeName>
</protein>
<gene>
    <name evidence="1" type="primary">rplN</name>
    <name type="ordered locus">ACIAD3209</name>
</gene>
<evidence type="ECO:0000255" key="1">
    <source>
        <dbReference type="HAMAP-Rule" id="MF_01367"/>
    </source>
</evidence>
<evidence type="ECO:0000305" key="2"/>
<reference key="1">
    <citation type="journal article" date="2004" name="Nucleic Acids Res.">
        <title>Unique features revealed by the genome sequence of Acinetobacter sp. ADP1, a versatile and naturally transformation competent bacterium.</title>
        <authorList>
            <person name="Barbe V."/>
            <person name="Vallenet D."/>
            <person name="Fonknechten N."/>
            <person name="Kreimeyer A."/>
            <person name="Oztas S."/>
            <person name="Labarre L."/>
            <person name="Cruveiller S."/>
            <person name="Robert C."/>
            <person name="Duprat S."/>
            <person name="Wincker P."/>
            <person name="Ornston L.N."/>
            <person name="Weissenbach J."/>
            <person name="Marliere P."/>
            <person name="Cohen G.N."/>
            <person name="Medigue C."/>
        </authorList>
    </citation>
    <scope>NUCLEOTIDE SEQUENCE [LARGE SCALE GENOMIC DNA]</scope>
    <source>
        <strain>ATCC 33305 / BD413 / ADP1</strain>
    </source>
</reference>
<keyword id="KW-0687">Ribonucleoprotein</keyword>
<keyword id="KW-0689">Ribosomal protein</keyword>
<keyword id="KW-0694">RNA-binding</keyword>
<keyword id="KW-0699">rRNA-binding</keyword>
<comment type="function">
    <text evidence="1">Binds to 23S rRNA. Forms part of two intersubunit bridges in the 70S ribosome.</text>
</comment>
<comment type="subunit">
    <text evidence="1">Part of the 50S ribosomal subunit. Forms a cluster with proteins L3 and L19. In the 70S ribosome, L14 and L19 interact and together make contacts with the 16S rRNA in bridges B5 and B8.</text>
</comment>
<comment type="similarity">
    <text evidence="1">Belongs to the universal ribosomal protein uL14 family.</text>
</comment>
<feature type="chain" id="PRO_0000266442" description="Large ribosomal subunit protein uL14">
    <location>
        <begin position="1"/>
        <end position="122"/>
    </location>
</feature>
<accession>Q6F7S2</accession>
<sequence length="122" mass="13474">MIQTESMLDVADNSGARRVQCIKVLGGSHRRYASVGDIIKVTVKEAIPRGRVKKGDVMNAVVVRTKFGIRRPDGSVIRFDDNAAVLLNNNKAPIATRIFGPVTRELRTEQFMKIISLAPEVL</sequence>
<organism>
    <name type="scientific">Acinetobacter baylyi (strain ATCC 33305 / BD413 / ADP1)</name>
    <dbReference type="NCBI Taxonomy" id="62977"/>
    <lineage>
        <taxon>Bacteria</taxon>
        <taxon>Pseudomonadati</taxon>
        <taxon>Pseudomonadota</taxon>
        <taxon>Gammaproteobacteria</taxon>
        <taxon>Moraxellales</taxon>
        <taxon>Moraxellaceae</taxon>
        <taxon>Acinetobacter</taxon>
    </lineage>
</organism>